<accession>P35727</accession>
<accession>D6VXM6</accession>
<feature type="chain" id="PRO_0000203176" description="Biogenesis of lysosome-related organelles complex 1 subunit BLI1">
    <location>
        <begin position="1"/>
        <end position="113"/>
    </location>
</feature>
<feature type="coiled-coil region" evidence="1">
    <location>
        <begin position="57"/>
        <end position="97"/>
    </location>
</feature>
<sequence>MGEQNKLYYDVEKLVNSLQESFDLDCAQSVSLFTSKSRSNEAWLEELENKFKLKDDVELDDVENLRAEIDMKLNMLEDKVSYYERLYKELEEFQNEIKIKTVVNNRRQSRTPK</sequence>
<comment type="function">
    <text evidence="4">Component of the biogenesis of lysosome-related organelles complex-1 (BLOC-1) involved in endosomal cargo sorting.</text>
</comment>
<comment type="subunit">
    <text evidence="4">Component of the biogenesis of lysosome-related organelles complex-1 (BLOC-1) composed of at least BLI1, BLS1, CNL1, KXD1, SNN1 and VAB2.</text>
</comment>
<comment type="interaction">
    <interactant intactId="EBI-26722">
        <id>P35727</id>
    </interactant>
    <interactant intactId="EBI-28775">
        <id>P48232</id>
        <label>SNN1</label>
    </interactant>
    <organismsDiffer>false</organismsDiffer>
    <experiments>4</experiments>
</comment>
<comment type="subcellular location">
    <subcellularLocation>
        <location evidence="2">Endosome</location>
    </subcellularLocation>
</comment>
<comment type="miscellaneous">
    <text evidence="3">Present with 1240 molecules/cell in log phase SD medium.</text>
</comment>
<comment type="similarity">
    <text evidence="5">Belongs to the BLI1 family.</text>
</comment>
<organism>
    <name type="scientific">Saccharomyces cerevisiae (strain ATCC 204508 / S288c)</name>
    <name type="common">Baker's yeast</name>
    <dbReference type="NCBI Taxonomy" id="559292"/>
    <lineage>
        <taxon>Eukaryota</taxon>
        <taxon>Fungi</taxon>
        <taxon>Dikarya</taxon>
        <taxon>Ascomycota</taxon>
        <taxon>Saccharomycotina</taxon>
        <taxon>Saccharomycetes</taxon>
        <taxon>Saccharomycetales</taxon>
        <taxon>Saccharomycetaceae</taxon>
        <taxon>Saccharomyces</taxon>
    </lineage>
</organism>
<evidence type="ECO:0000255" key="1"/>
<evidence type="ECO:0000269" key="2">
    <source>
    </source>
</evidence>
<evidence type="ECO:0000269" key="3">
    <source>
    </source>
</evidence>
<evidence type="ECO:0000269" key="4">
    <source>
    </source>
</evidence>
<evidence type="ECO:0000305" key="5"/>
<gene>
    <name type="primary">BLI1</name>
    <name type="ordered locus">YKL061W</name>
    <name type="ORF">YKL321</name>
</gene>
<dbReference type="EMBL" id="X75781">
    <property type="protein sequence ID" value="CAA53422.1"/>
    <property type="molecule type" value="Genomic_DNA"/>
</dbReference>
<dbReference type="EMBL" id="Z28061">
    <property type="protein sequence ID" value="CAA81898.1"/>
    <property type="molecule type" value="Genomic_DNA"/>
</dbReference>
<dbReference type="EMBL" id="AY558312">
    <property type="protein sequence ID" value="AAS56638.1"/>
    <property type="molecule type" value="Genomic_DNA"/>
</dbReference>
<dbReference type="EMBL" id="BK006944">
    <property type="protein sequence ID" value="DAA09096.1"/>
    <property type="molecule type" value="Genomic_DNA"/>
</dbReference>
<dbReference type="PIR" id="S37883">
    <property type="entry name" value="S37883"/>
</dbReference>
<dbReference type="RefSeq" id="NP_012862.1">
    <property type="nucleotide sequence ID" value="NM_001179627.1"/>
</dbReference>
<dbReference type="BioGRID" id="34072">
    <property type="interactions" value="82"/>
</dbReference>
<dbReference type="ComplexPortal" id="CPX-1153">
    <property type="entry name" value="BLOC-1 complex"/>
</dbReference>
<dbReference type="DIP" id="DIP-1992N"/>
<dbReference type="FunCoup" id="P35727">
    <property type="interactions" value="62"/>
</dbReference>
<dbReference type="IntAct" id="P35727">
    <property type="interactions" value="12"/>
</dbReference>
<dbReference type="MINT" id="P35727"/>
<dbReference type="STRING" id="4932.YKL061W"/>
<dbReference type="PaxDb" id="4932-YKL061W"/>
<dbReference type="PeptideAtlas" id="P35727"/>
<dbReference type="EnsemblFungi" id="YKL061W_mRNA">
    <property type="protein sequence ID" value="YKL061W"/>
    <property type="gene ID" value="YKL061W"/>
</dbReference>
<dbReference type="GeneID" id="853804"/>
<dbReference type="KEGG" id="sce:YKL061W"/>
<dbReference type="AGR" id="SGD:S000001544"/>
<dbReference type="SGD" id="S000001544">
    <property type="gene designation" value="BLI1"/>
</dbReference>
<dbReference type="VEuPathDB" id="FungiDB:YKL061W"/>
<dbReference type="eggNOG" id="ENOG502S8B7">
    <property type="taxonomic scope" value="Eukaryota"/>
</dbReference>
<dbReference type="HOGENOM" id="CLU_168467_0_0_1"/>
<dbReference type="InParanoid" id="P35727"/>
<dbReference type="OMA" id="AVANHEW"/>
<dbReference type="OrthoDB" id="4059150at2759"/>
<dbReference type="BioCyc" id="YEAST:G3O-31859-MONOMER"/>
<dbReference type="BioGRID-ORCS" id="853804">
    <property type="hits" value="1 hit in 10 CRISPR screens"/>
</dbReference>
<dbReference type="PRO" id="PR:P35727"/>
<dbReference type="Proteomes" id="UP000002311">
    <property type="component" value="Chromosome XI"/>
</dbReference>
<dbReference type="RNAct" id="P35727">
    <property type="molecule type" value="protein"/>
</dbReference>
<dbReference type="GO" id="GO:0031083">
    <property type="term" value="C:BLOC-1 complex"/>
    <property type="evidence" value="ECO:0000314"/>
    <property type="project" value="SGD"/>
</dbReference>
<dbReference type="GO" id="GO:0005768">
    <property type="term" value="C:endosome"/>
    <property type="evidence" value="ECO:0000314"/>
    <property type="project" value="ComplexPortal"/>
</dbReference>
<dbReference type="GO" id="GO:0007032">
    <property type="term" value="P:endosome organization"/>
    <property type="evidence" value="ECO:0000315"/>
    <property type="project" value="SGD"/>
</dbReference>
<dbReference type="GO" id="GO:0032880">
    <property type="term" value="P:regulation of protein localization"/>
    <property type="evidence" value="ECO:0000315"/>
    <property type="project" value="SGD"/>
</dbReference>
<dbReference type="InterPro" id="IPR020491">
    <property type="entry name" value="BLI1"/>
</dbReference>
<dbReference type="Pfam" id="PF17324">
    <property type="entry name" value="BLI1"/>
    <property type="match status" value="1"/>
</dbReference>
<protein>
    <recommendedName>
        <fullName>Biogenesis of lysosome-related organelles complex 1 subunit BLI1</fullName>
        <shortName>BLOC-1 subunit BLI1</shortName>
    </recommendedName>
    <alternativeName>
        <fullName>BLOC-1 interactor 1</fullName>
    </alternativeName>
</protein>
<keyword id="KW-0175">Coiled coil</keyword>
<keyword id="KW-0967">Endosome</keyword>
<keyword id="KW-1185">Reference proteome</keyword>
<keyword id="KW-0813">Transport</keyword>
<reference key="1">
    <citation type="journal article" date="1994" name="Yeast">
        <title>Sequence of a 28.6 kb region of yeast chromosome XI includes the FBA1 and TOA2 genes, an open reading frame (ORF) similar to a translationally controlled tumour protein, one ORF containing motifs also found in plant storage proteins and 13 ORFs with weak or no homology to known proteins.</title>
        <authorList>
            <person name="Rasmussen S.W."/>
        </authorList>
    </citation>
    <scope>NUCLEOTIDE SEQUENCE [GENOMIC DNA]</scope>
    <source>
        <strain>ATCC 204508 / S288c</strain>
    </source>
</reference>
<reference key="2">
    <citation type="journal article" date="1994" name="Nature">
        <title>Complete DNA sequence of yeast chromosome XI.</title>
        <authorList>
            <person name="Dujon B."/>
            <person name="Alexandraki D."/>
            <person name="Andre B."/>
            <person name="Ansorge W."/>
            <person name="Baladron V."/>
            <person name="Ballesta J.P.G."/>
            <person name="Banrevi A."/>
            <person name="Bolle P.-A."/>
            <person name="Bolotin-Fukuhara M."/>
            <person name="Bossier P."/>
            <person name="Bou G."/>
            <person name="Boyer J."/>
            <person name="Buitrago M.J."/>
            <person name="Cheret G."/>
            <person name="Colleaux L."/>
            <person name="Daignan-Fornier B."/>
            <person name="del Rey F."/>
            <person name="Dion C."/>
            <person name="Domdey H."/>
            <person name="Duesterhoeft A."/>
            <person name="Duesterhus S."/>
            <person name="Entian K.-D."/>
            <person name="Erfle H."/>
            <person name="Esteban P.F."/>
            <person name="Feldmann H."/>
            <person name="Fernandes L."/>
            <person name="Fobo G.M."/>
            <person name="Fritz C."/>
            <person name="Fukuhara H."/>
            <person name="Gabel C."/>
            <person name="Gaillon L."/>
            <person name="Garcia-Cantalejo J.M."/>
            <person name="Garcia-Ramirez J.J."/>
            <person name="Gent M.E."/>
            <person name="Ghazvini M."/>
            <person name="Goffeau A."/>
            <person name="Gonzalez A."/>
            <person name="Grothues D."/>
            <person name="Guerreiro P."/>
            <person name="Hegemann J.H."/>
            <person name="Hewitt N."/>
            <person name="Hilger F."/>
            <person name="Hollenberg C.P."/>
            <person name="Horaitis O."/>
            <person name="Indge K.J."/>
            <person name="Jacquier A."/>
            <person name="James C.M."/>
            <person name="Jauniaux J.-C."/>
            <person name="Jimenez A."/>
            <person name="Keuchel H."/>
            <person name="Kirchrath L."/>
            <person name="Kleine K."/>
            <person name="Koetter P."/>
            <person name="Legrain P."/>
            <person name="Liebl S."/>
            <person name="Louis E.J."/>
            <person name="Maia e Silva A."/>
            <person name="Marck C."/>
            <person name="Monnier A.-L."/>
            <person name="Moestl D."/>
            <person name="Mueller S."/>
            <person name="Obermaier B."/>
            <person name="Oliver S.G."/>
            <person name="Pallier C."/>
            <person name="Pascolo S."/>
            <person name="Pfeiffer F."/>
            <person name="Philippsen P."/>
            <person name="Planta R.J."/>
            <person name="Pohl F.M."/>
            <person name="Pohl T.M."/>
            <person name="Poehlmann R."/>
            <person name="Portetelle D."/>
            <person name="Purnelle B."/>
            <person name="Puzos V."/>
            <person name="Ramezani Rad M."/>
            <person name="Rasmussen S.W."/>
            <person name="Remacha M.A."/>
            <person name="Revuelta J.L."/>
            <person name="Richard G.-F."/>
            <person name="Rieger M."/>
            <person name="Rodrigues-Pousada C."/>
            <person name="Rose M."/>
            <person name="Rupp T."/>
            <person name="Santos M.A."/>
            <person name="Schwager C."/>
            <person name="Sensen C."/>
            <person name="Skala J."/>
            <person name="Soares H."/>
            <person name="Sor F."/>
            <person name="Stegemann J."/>
            <person name="Tettelin H."/>
            <person name="Thierry A."/>
            <person name="Tzermia M."/>
            <person name="Urrestarazu L.A."/>
            <person name="van Dyck L."/>
            <person name="van Vliet-Reedijk J.C."/>
            <person name="Valens M."/>
            <person name="Vandenbol M."/>
            <person name="Vilela C."/>
            <person name="Vissers S."/>
            <person name="von Wettstein D."/>
            <person name="Voss H."/>
            <person name="Wiemann S."/>
            <person name="Xu G."/>
            <person name="Zimmermann J."/>
            <person name="Haasemann M."/>
            <person name="Becker I."/>
            <person name="Mewes H.-W."/>
        </authorList>
    </citation>
    <scope>NUCLEOTIDE SEQUENCE [LARGE SCALE GENOMIC DNA]</scope>
    <source>
        <strain>ATCC 204508 / S288c</strain>
    </source>
</reference>
<reference key="3">
    <citation type="journal article" date="2014" name="G3 (Bethesda)">
        <title>The reference genome sequence of Saccharomyces cerevisiae: Then and now.</title>
        <authorList>
            <person name="Engel S.R."/>
            <person name="Dietrich F.S."/>
            <person name="Fisk D.G."/>
            <person name="Binkley G."/>
            <person name="Balakrishnan R."/>
            <person name="Costanzo M.C."/>
            <person name="Dwight S.S."/>
            <person name="Hitz B.C."/>
            <person name="Karra K."/>
            <person name="Nash R.S."/>
            <person name="Weng S."/>
            <person name="Wong E.D."/>
            <person name="Lloyd P."/>
            <person name="Skrzypek M.S."/>
            <person name="Miyasato S.R."/>
            <person name="Simison M."/>
            <person name="Cherry J.M."/>
        </authorList>
    </citation>
    <scope>GENOME REANNOTATION</scope>
    <source>
        <strain>ATCC 204508 / S288c</strain>
    </source>
</reference>
<reference key="4">
    <citation type="journal article" date="2007" name="Genome Res.">
        <title>Approaching a complete repository of sequence-verified protein-encoding clones for Saccharomyces cerevisiae.</title>
        <authorList>
            <person name="Hu Y."/>
            <person name="Rolfs A."/>
            <person name="Bhullar B."/>
            <person name="Murthy T.V.S."/>
            <person name="Zhu C."/>
            <person name="Berger M.F."/>
            <person name="Camargo A.A."/>
            <person name="Kelley F."/>
            <person name="McCarron S."/>
            <person name="Jepson D."/>
            <person name="Richardson A."/>
            <person name="Raphael J."/>
            <person name="Moreira D."/>
            <person name="Taycher E."/>
            <person name="Zuo D."/>
            <person name="Mohr S."/>
            <person name="Kane M.F."/>
            <person name="Williamson J."/>
            <person name="Simpson A.J.G."/>
            <person name="Bulyk M.L."/>
            <person name="Harlow E."/>
            <person name="Marsischky G."/>
            <person name="Kolodner R.D."/>
            <person name="LaBaer J."/>
        </authorList>
    </citation>
    <scope>NUCLEOTIDE SEQUENCE [GENOMIC DNA]</scope>
    <source>
        <strain>ATCC 204508 / S288c</strain>
    </source>
</reference>
<reference key="5">
    <citation type="journal article" date="2003" name="Nature">
        <title>Global analysis of protein localization in budding yeast.</title>
        <authorList>
            <person name="Huh W.-K."/>
            <person name="Falvo J.V."/>
            <person name="Gerke L.C."/>
            <person name="Carroll A.S."/>
            <person name="Howson R.W."/>
            <person name="Weissman J.S."/>
            <person name="O'Shea E.K."/>
        </authorList>
    </citation>
    <scope>SUBCELLULAR LOCATION [LARGE SCALE ANALYSIS]</scope>
</reference>
<reference key="6">
    <citation type="journal article" date="2003" name="Nature">
        <title>Global analysis of protein expression in yeast.</title>
        <authorList>
            <person name="Ghaemmaghami S."/>
            <person name="Huh W.-K."/>
            <person name="Bower K."/>
            <person name="Howson R.W."/>
            <person name="Belle A."/>
            <person name="Dephoure N."/>
            <person name="O'Shea E.K."/>
            <person name="Weissman J.S."/>
        </authorList>
    </citation>
    <scope>LEVEL OF PROTEIN EXPRESSION [LARGE SCALE ANALYSIS]</scope>
</reference>
<reference key="7">
    <citation type="journal article" date="2011" name="Traffic">
        <title>Yeast homologues of three BLOC-1 subunits highlight KxDL proteins as conserved interactors of BLOC-1.</title>
        <authorList>
            <person name="Hayes M.J."/>
            <person name="Bryon K."/>
            <person name="Satkurunathan J."/>
            <person name="Levine T.P."/>
        </authorList>
    </citation>
    <scope>IDENTIFICATION IN THE BLOC-1 COMPLEX</scope>
    <scope>FUNCTION</scope>
</reference>
<name>BLI1_YEAST</name>
<proteinExistence type="evidence at protein level"/>